<evidence type="ECO:0000255" key="1">
    <source>
        <dbReference type="HAMAP-Rule" id="MF_01333"/>
    </source>
</evidence>
<evidence type="ECO:0000305" key="2"/>
<proteinExistence type="inferred from homology"/>
<comment type="function">
    <text evidence="1">This is one of the proteins that bind and probably mediate the attachment of the 5S RNA into the large ribosomal subunit, where it forms part of the central protuberance. In the 70S ribosome it contacts protein S13 of the 30S subunit (bridge B1b), connecting the 2 subunits; this bridge is implicated in subunit movement. Contacts the P site tRNA; the 5S rRNA and some of its associated proteins might help stabilize positioning of ribosome-bound tRNAs.</text>
</comment>
<comment type="subunit">
    <text evidence="1">Part of the 50S ribosomal subunit; part of the 5S rRNA/L5/L18/L25 subcomplex. Contacts the 5S rRNA and the P site tRNA. Forms a bridge to the 30S subunit in the 70S ribosome.</text>
</comment>
<comment type="similarity">
    <text evidence="1">Belongs to the universal ribosomal protein uL5 family.</text>
</comment>
<name>RL5_STRPJ</name>
<feature type="chain" id="PRO_1000166151" description="Large ribosomal subunit protein uL5">
    <location>
        <begin position="1"/>
        <end position="180"/>
    </location>
</feature>
<sequence length="180" mass="19774">MANRLKEKYLNEVVPALTEQFNYSSVMAVPKVDKIVLNMGVGEAVSNAKSLEKAAEELALISGQKPLITKAKKSIAGFRLREGVAIGAKVTLRGERMYEFLDKLVSVSLPRVRDFHGVPTKSFDGRGNYTLGVKEQLIFPEINFDDVDKTRGLDIVIVTTANTDEESRALLTGLGMPFAK</sequence>
<gene>
    <name evidence="1" type="primary">rplE</name>
    <name type="ordered locus">SPN23F02110</name>
</gene>
<keyword id="KW-0687">Ribonucleoprotein</keyword>
<keyword id="KW-0689">Ribosomal protein</keyword>
<keyword id="KW-0694">RNA-binding</keyword>
<keyword id="KW-0699">rRNA-binding</keyword>
<keyword id="KW-0820">tRNA-binding</keyword>
<organism>
    <name type="scientific">Streptococcus pneumoniae (strain ATCC 700669 / Spain 23F-1)</name>
    <dbReference type="NCBI Taxonomy" id="561276"/>
    <lineage>
        <taxon>Bacteria</taxon>
        <taxon>Bacillati</taxon>
        <taxon>Bacillota</taxon>
        <taxon>Bacilli</taxon>
        <taxon>Lactobacillales</taxon>
        <taxon>Streptococcaceae</taxon>
        <taxon>Streptococcus</taxon>
    </lineage>
</organism>
<accession>B8ZKG9</accession>
<reference key="1">
    <citation type="journal article" date="2009" name="J. Bacteriol.">
        <title>Role of conjugative elements in the evolution of the multidrug-resistant pandemic clone Streptococcus pneumoniae Spain23F ST81.</title>
        <authorList>
            <person name="Croucher N.J."/>
            <person name="Walker D."/>
            <person name="Romero P."/>
            <person name="Lennard N."/>
            <person name="Paterson G.K."/>
            <person name="Bason N.C."/>
            <person name="Mitchell A.M."/>
            <person name="Quail M.A."/>
            <person name="Andrew P.W."/>
            <person name="Parkhill J."/>
            <person name="Bentley S.D."/>
            <person name="Mitchell T.J."/>
        </authorList>
    </citation>
    <scope>NUCLEOTIDE SEQUENCE [LARGE SCALE GENOMIC DNA]</scope>
    <source>
        <strain>ATCC 700669 / Spain 23F-1</strain>
    </source>
</reference>
<protein>
    <recommendedName>
        <fullName evidence="1">Large ribosomal subunit protein uL5</fullName>
    </recommendedName>
    <alternativeName>
        <fullName evidence="2">50S ribosomal protein L5</fullName>
    </alternativeName>
</protein>
<dbReference type="EMBL" id="FM211187">
    <property type="protein sequence ID" value="CAR68071.1"/>
    <property type="molecule type" value="Genomic_DNA"/>
</dbReference>
<dbReference type="RefSeq" id="WP_000013542.1">
    <property type="nucleotide sequence ID" value="NC_011900.1"/>
</dbReference>
<dbReference type="SMR" id="B8ZKG9"/>
<dbReference type="GeneID" id="93738969"/>
<dbReference type="KEGG" id="sne:SPN23F02110"/>
<dbReference type="HOGENOM" id="CLU_061015_2_1_9"/>
<dbReference type="GO" id="GO:1990904">
    <property type="term" value="C:ribonucleoprotein complex"/>
    <property type="evidence" value="ECO:0007669"/>
    <property type="project" value="UniProtKB-KW"/>
</dbReference>
<dbReference type="GO" id="GO:0005840">
    <property type="term" value="C:ribosome"/>
    <property type="evidence" value="ECO:0007669"/>
    <property type="project" value="UniProtKB-KW"/>
</dbReference>
<dbReference type="GO" id="GO:0019843">
    <property type="term" value="F:rRNA binding"/>
    <property type="evidence" value="ECO:0007669"/>
    <property type="project" value="UniProtKB-UniRule"/>
</dbReference>
<dbReference type="GO" id="GO:0003735">
    <property type="term" value="F:structural constituent of ribosome"/>
    <property type="evidence" value="ECO:0007669"/>
    <property type="project" value="InterPro"/>
</dbReference>
<dbReference type="GO" id="GO:0000049">
    <property type="term" value="F:tRNA binding"/>
    <property type="evidence" value="ECO:0007669"/>
    <property type="project" value="UniProtKB-UniRule"/>
</dbReference>
<dbReference type="GO" id="GO:0006412">
    <property type="term" value="P:translation"/>
    <property type="evidence" value="ECO:0007669"/>
    <property type="project" value="UniProtKB-UniRule"/>
</dbReference>
<dbReference type="FunFam" id="3.30.1440.10:FF:000001">
    <property type="entry name" value="50S ribosomal protein L5"/>
    <property type="match status" value="1"/>
</dbReference>
<dbReference type="Gene3D" id="3.30.1440.10">
    <property type="match status" value="1"/>
</dbReference>
<dbReference type="HAMAP" id="MF_01333_B">
    <property type="entry name" value="Ribosomal_uL5_B"/>
    <property type="match status" value="1"/>
</dbReference>
<dbReference type="InterPro" id="IPR002132">
    <property type="entry name" value="Ribosomal_uL5"/>
</dbReference>
<dbReference type="InterPro" id="IPR020930">
    <property type="entry name" value="Ribosomal_uL5_bac-type"/>
</dbReference>
<dbReference type="InterPro" id="IPR031309">
    <property type="entry name" value="Ribosomal_uL5_C"/>
</dbReference>
<dbReference type="InterPro" id="IPR020929">
    <property type="entry name" value="Ribosomal_uL5_CS"/>
</dbReference>
<dbReference type="InterPro" id="IPR022803">
    <property type="entry name" value="Ribosomal_uL5_dom_sf"/>
</dbReference>
<dbReference type="InterPro" id="IPR031310">
    <property type="entry name" value="Ribosomal_uL5_N"/>
</dbReference>
<dbReference type="NCBIfam" id="NF000585">
    <property type="entry name" value="PRK00010.1"/>
    <property type="match status" value="1"/>
</dbReference>
<dbReference type="PANTHER" id="PTHR11994">
    <property type="entry name" value="60S RIBOSOMAL PROTEIN L11-RELATED"/>
    <property type="match status" value="1"/>
</dbReference>
<dbReference type="Pfam" id="PF00281">
    <property type="entry name" value="Ribosomal_L5"/>
    <property type="match status" value="1"/>
</dbReference>
<dbReference type="Pfam" id="PF00673">
    <property type="entry name" value="Ribosomal_L5_C"/>
    <property type="match status" value="1"/>
</dbReference>
<dbReference type="PIRSF" id="PIRSF002161">
    <property type="entry name" value="Ribosomal_L5"/>
    <property type="match status" value="1"/>
</dbReference>
<dbReference type="SUPFAM" id="SSF55282">
    <property type="entry name" value="RL5-like"/>
    <property type="match status" value="1"/>
</dbReference>
<dbReference type="PROSITE" id="PS00358">
    <property type="entry name" value="RIBOSOMAL_L5"/>
    <property type="match status" value="1"/>
</dbReference>